<protein>
    <recommendedName>
        <fullName>Myotubularin-related protein 13</fullName>
    </recommendedName>
    <alternativeName>
        <fullName evidence="8">Inactive phosphatidylinositol 3-phosphatase 13</fullName>
    </alternativeName>
    <alternativeName>
        <fullName>SET-binding factor 2</fullName>
    </alternativeName>
</protein>
<name>MTMRD_XENLA</name>
<keyword id="KW-0072">Autophagy</keyword>
<keyword id="KW-0963">Cytoplasm</keyword>
<keyword id="KW-0344">Guanine-nucleotide releasing factor</keyword>
<keyword id="KW-0472">Membrane</keyword>
<keyword id="KW-1185">Reference proteome</keyword>
<sequence length="1873" mass="210866">MARLADYFIVVGYDHEKTGSEGFGKIIQRFPMTDWSDTPFPQGIELFCQPGGWQLSRERKQPTFFIVVLTDIDSDRHYCACLTFYEAEINLQGTKREHSETEEEDSGLIQPAQVFAPKSLVLVSRLDYPEIFRACLGLIYTVYIDSLNVSLENLVSNLVTCIVPCAGGSQKLFSLGAGDRQLIQTPLHDSLPVTGTSVALLFQQLGIQNVLSLFCAVLTENKVLFHSSSFQRLGDACRALEALIYPLKYSYPYIPILPAQLLEVLSSPTPFIIGVHSVFCSEIHDLLDVIIADLDGGTIKIPECIHLSPIPEPLLHQTQAALSLVLHPDLEVADNAFAPLRTPVPHIKLLDKEVRAVFLRLFAQIFQGYRSCLQLIRIHAEPIIHFHKAAFLGQRGLIENDFLTKVLSGMSFAGFVSERGPPYRPCDLFDELVSFEVERIKDDDQNDTHKILKHIRELAEQLFKNENPNPHMAFQKVPKPTEGSHLRVHILPFSKMNDLKVQELIQEGLNKNQNSILSPRAEKKCVVPAGSPVVSIVDKASSVFNSARRLEVVRNCIMYIFENKTLETEKTLPAALRALKGKAARQCLTEELALHVQQNRSMLNHQQFDYIVRMMNCALQDCSGSEEYTIASQLLPLATAFCRKLSAAVSQFAYTCVQDHGVWANQQFWETTFYNDVQNQVRSLYLTTKNGNQGASEPKENGVDSGNPERTVMDLAAEQLRLWPTLSKETQQELIQSEESTVFSQAIHFANLMVYLLVPLDTSKNKLLRTSATGDWESGSNSIVTNSIAGSVAESYDTESGFEDSENDIANSVVRFITRFIDKVCTESGVTQDHIKSLHCMIPGIVAMHIETLEAVHRESRRLPPIKKPKIMRPALLPGEEFVCEALRVLLDPDGREEATGGMLGGPHILPAEGALFLTTYRIIFKGTPHDALVGEQTVIRSVPIASITREKKINVQNQLHQNMQEGLQIRSATFQLIKVAFDEEVSAEMVDLFKKQLMKFRYPLSIFSAFAFAAGQTAPPIILPKQKEKNTSFRTISKTIVKGAKRAGKMTIGRQYAAKKKTGTILEERGSRSGGNEDDDISVSDDNELPSGTLKPSEKSTMEQLVERACFRDYQRLALGTISNSSTRFKSEHFRVTALNRMHSLCRSYPGLLVVPQSVQDSSLQKVARCYRHNRLPVVSWKNAKTNAVLLRGGGFHGKTVVGLFKSQNTHTAAPASSLESSSSIEQEKYLQALLNAISVHYKMNGNSTLTVRPTLALSPGSDRKSSRMSSVVKHVVPSHVDGSLSHSFARGGVWASLRSSNRLITTQTPLIDVGARLVGKDLQTTYTDHSALQSQLLKRQAALYIFGEKSQLRGFKFDFALNCEFVPVEFGDIRQVKTSFKKLMRACVPSSNPTDSESTFLKAMGESEWFLQIHRIIQLSVIISELMESGSSVMICLEDGWDITTQVVSLVQILGDPFYRTLEGFRMLIEKEWLSFGHKFSQRSNLSPSSQGTGFVPIFLQFLDCVHQIHNQYPTEFEFNRYYLKFLAYHHVSNRFKTFLLDSDYERLEHGTLFEDKGDKHSRRGICIWEYIERIHKKKTVFFNYLFAPTELEALKPSANISTLRKWEYYMEETLASGPSYDWIITPSRFNASDETDSGEEAQQQGKRKIVWPCYDDVQKVQPDAITHLMNEIERLEIKLNQTSERWQLLWERAKVKLKENAKKENNNPASLVSANLQSYQKRSMVHLPDSGLGDEQNLNASPSNGVDRRTATLYNHFTSKNEENRSYEGILYKRGALLKGWKPRWFVLDITKHQLRYYDSGEDTSCKGYIDLADVETVVPAAPTIGAPKHANEKAFFDVKTSKRVYNFCAQDAQSAQLWMDKIQNCISDA</sequence>
<reference key="1">
    <citation type="submission" date="2004-04" db="EMBL/GenBank/DDBJ databases">
        <authorList>
            <consortium name="NIH - Xenopus Gene Collection (XGC) project"/>
        </authorList>
    </citation>
    <scope>NUCLEOTIDE SEQUENCE [LARGE SCALE MRNA]</scope>
    <source>
        <tissue>Embryo</tissue>
    </source>
</reference>
<organism>
    <name type="scientific">Xenopus laevis</name>
    <name type="common">African clawed frog</name>
    <dbReference type="NCBI Taxonomy" id="8355"/>
    <lineage>
        <taxon>Eukaryota</taxon>
        <taxon>Metazoa</taxon>
        <taxon>Chordata</taxon>
        <taxon>Craniata</taxon>
        <taxon>Vertebrata</taxon>
        <taxon>Euteleostomi</taxon>
        <taxon>Amphibia</taxon>
        <taxon>Batrachia</taxon>
        <taxon>Anura</taxon>
        <taxon>Pipoidea</taxon>
        <taxon>Pipidae</taxon>
        <taxon>Xenopodinae</taxon>
        <taxon>Xenopus</taxon>
        <taxon>Xenopus</taxon>
    </lineage>
</organism>
<accession>Q6NTN5</accession>
<evidence type="ECO:0000250" key="1">
    <source>
        <dbReference type="UniProtKB" id="E9PXF8"/>
    </source>
</evidence>
<evidence type="ECO:0000250" key="2">
    <source>
        <dbReference type="UniProtKB" id="Q86WG5"/>
    </source>
</evidence>
<evidence type="ECO:0000255" key="3"/>
<evidence type="ECO:0000255" key="4">
    <source>
        <dbReference type="PROSITE-ProRule" id="PRU00145"/>
    </source>
</evidence>
<evidence type="ECO:0000255" key="5">
    <source>
        <dbReference type="PROSITE-ProRule" id="PRU00304"/>
    </source>
</evidence>
<evidence type="ECO:0000255" key="6">
    <source>
        <dbReference type="PROSITE-ProRule" id="PRU00669"/>
    </source>
</evidence>
<evidence type="ECO:0000256" key="7">
    <source>
        <dbReference type="SAM" id="MobiDB-lite"/>
    </source>
</evidence>
<evidence type="ECO:0000305" key="8"/>
<feature type="chain" id="PRO_0000094946" description="Myotubularin-related protein 13">
    <location>
        <begin position="1"/>
        <end position="1873"/>
    </location>
</feature>
<feature type="domain" description="uDENN" evidence="5">
    <location>
        <begin position="7"/>
        <end position="171"/>
    </location>
</feature>
<feature type="domain" description="cDENN" evidence="5">
    <location>
        <begin position="190"/>
        <end position="323"/>
    </location>
</feature>
<feature type="domain" description="dDENN" evidence="5">
    <location>
        <begin position="325"/>
        <end position="426"/>
    </location>
</feature>
<feature type="domain" description="GRAM" evidence="3">
    <location>
        <begin position="869"/>
        <end position="955"/>
    </location>
</feature>
<feature type="domain" description="Myotubularin phosphatase" evidence="6">
    <location>
        <begin position="1105"/>
        <end position="1613"/>
    </location>
</feature>
<feature type="domain" description="PH" evidence="4">
    <location>
        <begin position="1767"/>
        <end position="1871"/>
    </location>
</feature>
<feature type="region of interest" description="Disordered" evidence="7">
    <location>
        <begin position="1064"/>
        <end position="1102"/>
    </location>
</feature>
<feature type="compositionally biased region" description="Acidic residues" evidence="7">
    <location>
        <begin position="1077"/>
        <end position="1089"/>
    </location>
</feature>
<comment type="function">
    <text evidence="1 2">Guanine nucleotide exchange factor (GEF) which may activate Rab small GTPases (By similarity). Promotes the exchange of GDP to GTP, converting inactive GDP-bound Rab proteins into their active GTP-bound form (By similarity). Acts as an adapter for the phosphatase mtmr2 (By similarity).</text>
</comment>
<comment type="subcellular location">
    <subcellularLocation>
        <location evidence="2">Cytoplasm</location>
    </subcellularLocation>
    <subcellularLocation>
        <location evidence="2">Membrane</location>
        <topology evidence="2">Peripheral membrane protein</topology>
    </subcellularLocation>
    <text evidence="2">Associated with membranes.</text>
</comment>
<comment type="similarity">
    <text evidence="8">Belongs to the protein-tyrosine phosphatase family. Non-receptor class myotubularin subfamily.</text>
</comment>
<comment type="caution">
    <text evidence="8">Although it belongs to the non-receptor class myotubularin subfamily, lacks the conserved active site cysteine residue at position 1439 in the dsPTPase catalytic loop, suggesting that it has no phosphatase activity.</text>
</comment>
<gene>
    <name type="primary">sbf2</name>
    <name type="synonym">mtmr13</name>
</gene>
<proteinExistence type="evidence at transcript level"/>
<dbReference type="EMBL" id="BC068924">
    <property type="protein sequence ID" value="AAH68924.1"/>
    <property type="molecule type" value="mRNA"/>
</dbReference>
<dbReference type="RefSeq" id="NP_001084507.1">
    <property type="nucleotide sequence ID" value="NM_001091038.1"/>
</dbReference>
<dbReference type="SMR" id="Q6NTN5"/>
<dbReference type="DNASU" id="414452"/>
<dbReference type="GeneID" id="414452"/>
<dbReference type="KEGG" id="xla:414452"/>
<dbReference type="AGR" id="Xenbase:XB-GENE-1004473"/>
<dbReference type="CTD" id="414452"/>
<dbReference type="Xenbase" id="XB-GENE-1004473">
    <property type="gene designation" value="sbf2.L"/>
</dbReference>
<dbReference type="OrthoDB" id="74314at2759"/>
<dbReference type="Proteomes" id="UP000186698">
    <property type="component" value="Chromosome 4L"/>
</dbReference>
<dbReference type="Bgee" id="414452">
    <property type="expression patterns" value="Expressed in egg cell and 19 other cell types or tissues"/>
</dbReference>
<dbReference type="GO" id="GO:0005737">
    <property type="term" value="C:cytoplasm"/>
    <property type="evidence" value="ECO:0000318"/>
    <property type="project" value="GO_Central"/>
</dbReference>
<dbReference type="GO" id="GO:0016020">
    <property type="term" value="C:membrane"/>
    <property type="evidence" value="ECO:0000318"/>
    <property type="project" value="GO_Central"/>
</dbReference>
<dbReference type="GO" id="GO:0005085">
    <property type="term" value="F:guanyl-nucleotide exchange factor activity"/>
    <property type="evidence" value="ECO:0000318"/>
    <property type="project" value="GO_Central"/>
</dbReference>
<dbReference type="GO" id="GO:0006914">
    <property type="term" value="P:autophagy"/>
    <property type="evidence" value="ECO:0007669"/>
    <property type="project" value="UniProtKB-KW"/>
</dbReference>
<dbReference type="CDD" id="cd13339">
    <property type="entry name" value="PH-GRAM_MTMR13"/>
    <property type="match status" value="1"/>
</dbReference>
<dbReference type="CDD" id="cd01235">
    <property type="entry name" value="PH_Sbf1_hMTMR5"/>
    <property type="match status" value="1"/>
</dbReference>
<dbReference type="CDD" id="cd14589">
    <property type="entry name" value="PTP-MTMR13"/>
    <property type="match status" value="1"/>
</dbReference>
<dbReference type="FunFam" id="2.30.29.30:FF:000093">
    <property type="entry name" value="SET binding factor 2"/>
    <property type="match status" value="1"/>
</dbReference>
<dbReference type="FunFam" id="3.30.450.200:FF:000004">
    <property type="entry name" value="SET binding factor 2"/>
    <property type="match status" value="1"/>
</dbReference>
<dbReference type="FunFam" id="3.40.50.11500:FF:000006">
    <property type="entry name" value="SET binding factor 2"/>
    <property type="match status" value="1"/>
</dbReference>
<dbReference type="Gene3D" id="3.30.450.200">
    <property type="match status" value="1"/>
</dbReference>
<dbReference type="Gene3D" id="3.40.50.11500">
    <property type="match status" value="1"/>
</dbReference>
<dbReference type="Gene3D" id="2.30.29.30">
    <property type="entry name" value="Pleckstrin-homology domain (PH domain)/Phosphotyrosine-binding domain (PTB)"/>
    <property type="match status" value="2"/>
</dbReference>
<dbReference type="InterPro" id="IPR001194">
    <property type="entry name" value="cDENN_dom"/>
</dbReference>
<dbReference type="InterPro" id="IPR005112">
    <property type="entry name" value="dDENN_dom"/>
</dbReference>
<dbReference type="InterPro" id="IPR043153">
    <property type="entry name" value="DENN_C"/>
</dbReference>
<dbReference type="InterPro" id="IPR004182">
    <property type="entry name" value="GRAM"/>
</dbReference>
<dbReference type="InterPro" id="IPR037823">
    <property type="entry name" value="MTMR13_PH-GRAM"/>
</dbReference>
<dbReference type="InterPro" id="IPR030564">
    <property type="entry name" value="Myotubularin"/>
</dbReference>
<dbReference type="InterPro" id="IPR010569">
    <property type="entry name" value="Myotubularin-like_Pase_dom"/>
</dbReference>
<dbReference type="InterPro" id="IPR011993">
    <property type="entry name" value="PH-like_dom_sf"/>
</dbReference>
<dbReference type="InterPro" id="IPR001849">
    <property type="entry name" value="PH_domain"/>
</dbReference>
<dbReference type="InterPro" id="IPR029021">
    <property type="entry name" value="Prot-tyrosine_phosphatase-like"/>
</dbReference>
<dbReference type="InterPro" id="IPR022096">
    <property type="entry name" value="SBF1/SBF2"/>
</dbReference>
<dbReference type="InterPro" id="IPR037516">
    <property type="entry name" value="Tripartite_DENN"/>
</dbReference>
<dbReference type="InterPro" id="IPR005113">
    <property type="entry name" value="uDENN_dom"/>
</dbReference>
<dbReference type="PANTHER" id="PTHR10807">
    <property type="entry name" value="MYOTUBULARIN-RELATED"/>
    <property type="match status" value="1"/>
</dbReference>
<dbReference type="PANTHER" id="PTHR10807:SF4">
    <property type="entry name" value="MYOTUBULARIN-RELATED PROTEIN 13"/>
    <property type="match status" value="1"/>
</dbReference>
<dbReference type="Pfam" id="PF02141">
    <property type="entry name" value="DENN"/>
    <property type="match status" value="1"/>
</dbReference>
<dbReference type="Pfam" id="PF02893">
    <property type="entry name" value="GRAM"/>
    <property type="match status" value="1"/>
</dbReference>
<dbReference type="Pfam" id="PF06602">
    <property type="entry name" value="Myotub-related"/>
    <property type="match status" value="1"/>
</dbReference>
<dbReference type="Pfam" id="PF00169">
    <property type="entry name" value="PH"/>
    <property type="match status" value="1"/>
</dbReference>
<dbReference type="Pfam" id="PF12335">
    <property type="entry name" value="SBF2"/>
    <property type="match status" value="1"/>
</dbReference>
<dbReference type="Pfam" id="PF03456">
    <property type="entry name" value="uDENN"/>
    <property type="match status" value="1"/>
</dbReference>
<dbReference type="SMART" id="SM00801">
    <property type="entry name" value="dDENN"/>
    <property type="match status" value="1"/>
</dbReference>
<dbReference type="SMART" id="SM00799">
    <property type="entry name" value="DENN"/>
    <property type="match status" value="1"/>
</dbReference>
<dbReference type="SMART" id="SM00568">
    <property type="entry name" value="GRAM"/>
    <property type="match status" value="1"/>
</dbReference>
<dbReference type="SMART" id="SM00233">
    <property type="entry name" value="PH"/>
    <property type="match status" value="1"/>
</dbReference>
<dbReference type="SMART" id="SM00800">
    <property type="entry name" value="uDENN"/>
    <property type="match status" value="1"/>
</dbReference>
<dbReference type="SUPFAM" id="SSF52799">
    <property type="entry name" value="(Phosphotyrosine protein) phosphatases II"/>
    <property type="match status" value="1"/>
</dbReference>
<dbReference type="SUPFAM" id="SSF50729">
    <property type="entry name" value="PH domain-like"/>
    <property type="match status" value="2"/>
</dbReference>
<dbReference type="PROSITE" id="PS50211">
    <property type="entry name" value="DENN"/>
    <property type="match status" value="1"/>
</dbReference>
<dbReference type="PROSITE" id="PS50003">
    <property type="entry name" value="PH_DOMAIN"/>
    <property type="match status" value="1"/>
</dbReference>
<dbReference type="PROSITE" id="PS51339">
    <property type="entry name" value="PPASE_MYOTUBULARIN"/>
    <property type="match status" value="1"/>
</dbReference>